<feature type="signal peptide" evidence="3">
    <location>
        <begin position="1"/>
        <end position="26"/>
    </location>
</feature>
<feature type="chain" id="PRO_5000070584" description="Putative serine protease 42">
    <location>
        <begin position="27"/>
        <end position="293"/>
    </location>
</feature>
<feature type="domain" description="Peptidase S1" evidence="4">
    <location>
        <begin position="80"/>
        <end position="293"/>
    </location>
</feature>
<feature type="region of interest" description="Disordered" evidence="5">
    <location>
        <begin position="33"/>
        <end position="60"/>
    </location>
</feature>
<feature type="active site" description="Charge relay system" evidence="1">
    <location>
        <position position="120"/>
    </location>
</feature>
<feature type="active site" description="Charge relay system" evidence="1">
    <location>
        <position position="166"/>
    </location>
</feature>
<feature type="active site" description="Charge relay system" evidence="1">
    <location>
        <position position="267"/>
    </location>
</feature>
<feature type="glycosylation site" description="N-linked (GlcNAc...) asparagine" evidence="3">
    <location>
        <position position="141"/>
    </location>
</feature>
<feature type="glycosylation site" description="N-linked (GlcNAc...) asparagine" evidence="3">
    <location>
        <position position="177"/>
    </location>
</feature>
<feature type="glycosylation site" description="N-linked (GlcNAc...) asparagine" evidence="3">
    <location>
        <position position="276"/>
    </location>
</feature>
<feature type="disulfide bond" evidence="4">
    <location>
        <begin position="105"/>
        <end position="121"/>
    </location>
</feature>
<feature type="disulfide bond" evidence="4">
    <location>
        <begin position="200"/>
        <end position="273"/>
    </location>
</feature>
<feature type="disulfide bond" evidence="4">
    <location>
        <begin position="232"/>
        <end position="253"/>
    </location>
</feature>
<feature type="disulfide bond" evidence="4">
    <location>
        <begin position="263"/>
        <end position="291"/>
    </location>
</feature>
<sequence length="293" mass="32006">MSSGGGSRGLLAWLLLLQPWPGQNWAGMAAPRLPSPLLSEEGGENPEASPAPGPEAGPPLNLFTSFPGDSLLCGRTPLRIVGGVDAEEGRWPWQVSVRTKGRHICGGTLVTATWVLTAGHCISSRFHYSVKMGDRSVYNENTSVVVSVQRAFVHPKFSTVTTIRNDLALLQLQHPVNFTSNIQPICIPQENFQVEGRTRCWVTGWGKTPEREKLASEILQDVDQYIMCYEECNKIIQKALSSTKDVIIKGMVCGYKEQGKDSCQGDSGGRLACEYNDTWVQVGIVSWGIGCGR</sequence>
<evidence type="ECO:0000250" key="1"/>
<evidence type="ECO:0000250" key="2">
    <source>
        <dbReference type="UniProtKB" id="Q8VIF2"/>
    </source>
</evidence>
<evidence type="ECO:0000255" key="3"/>
<evidence type="ECO:0000255" key="4">
    <source>
        <dbReference type="PROSITE-ProRule" id="PRU00274"/>
    </source>
</evidence>
<evidence type="ECO:0000256" key="5">
    <source>
        <dbReference type="SAM" id="MobiDB-lite"/>
    </source>
</evidence>
<evidence type="ECO:0000305" key="6"/>
<evidence type="ECO:0000312" key="7">
    <source>
        <dbReference type="HGNC" id="HGNC:30716"/>
    </source>
</evidence>
<accession>Q7Z5A4</accession>
<name>PRS42_HUMAN</name>
<keyword id="KW-1003">Cell membrane</keyword>
<keyword id="KW-0963">Cytoplasm</keyword>
<keyword id="KW-0221">Differentiation</keyword>
<keyword id="KW-1015">Disulfide bond</keyword>
<keyword id="KW-0325">Glycoprotein</keyword>
<keyword id="KW-0336">GPI-anchor</keyword>
<keyword id="KW-0378">Hydrolase</keyword>
<keyword id="KW-0449">Lipoprotein</keyword>
<keyword id="KW-0472">Membrane</keyword>
<keyword id="KW-0645">Protease</keyword>
<keyword id="KW-1185">Reference proteome</keyword>
<keyword id="KW-0720">Serine protease</keyword>
<keyword id="KW-0732">Signal</keyword>
<keyword id="KW-0744">Spermatogenesis</keyword>
<gene>
    <name evidence="7" type="primary">PRSS42P</name>
    <name evidence="7" type="synonym">PRSS42</name>
    <name evidence="7" type="synonym">TESSP2</name>
</gene>
<organism>
    <name type="scientific">Homo sapiens</name>
    <name type="common">Human</name>
    <dbReference type="NCBI Taxonomy" id="9606"/>
    <lineage>
        <taxon>Eukaryota</taxon>
        <taxon>Metazoa</taxon>
        <taxon>Chordata</taxon>
        <taxon>Craniata</taxon>
        <taxon>Vertebrata</taxon>
        <taxon>Euteleostomi</taxon>
        <taxon>Mammalia</taxon>
        <taxon>Eutheria</taxon>
        <taxon>Euarchontoglires</taxon>
        <taxon>Primates</taxon>
        <taxon>Haplorrhini</taxon>
        <taxon>Catarrhini</taxon>
        <taxon>Hominidae</taxon>
        <taxon>Homo</taxon>
    </lineage>
</organism>
<reference key="1">
    <citation type="journal article" date="2003" name="Nat. Rev. Genet.">
        <title>Human and mouse proteases: a comparative genomic approach.</title>
        <authorList>
            <person name="Puente X.S."/>
            <person name="Sanchez L.M."/>
            <person name="Overall C.M."/>
            <person name="Lopez-Otin C."/>
        </authorList>
    </citation>
    <scope>NUCLEOTIDE SEQUENCE [MRNA]</scope>
</reference>
<reference key="2">
    <citation type="submission" date="2005-07" db="EMBL/GenBank/DDBJ databases">
        <authorList>
            <person name="Mural R.J."/>
            <person name="Istrail S."/>
            <person name="Sutton G.G."/>
            <person name="Florea L."/>
            <person name="Halpern A.L."/>
            <person name="Mobarry C.M."/>
            <person name="Lippert R."/>
            <person name="Walenz B."/>
            <person name="Shatkay H."/>
            <person name="Dew I."/>
            <person name="Miller J.R."/>
            <person name="Flanigan M.J."/>
            <person name="Edwards N.J."/>
            <person name="Bolanos R."/>
            <person name="Fasulo D."/>
            <person name="Halldorsson B.V."/>
            <person name="Hannenhalli S."/>
            <person name="Turner R."/>
            <person name="Yooseph S."/>
            <person name="Lu F."/>
            <person name="Nusskern D.R."/>
            <person name="Shue B.C."/>
            <person name="Zheng X.H."/>
            <person name="Zhong F."/>
            <person name="Delcher A.L."/>
            <person name="Huson D.H."/>
            <person name="Kravitz S.A."/>
            <person name="Mouchard L."/>
            <person name="Reinert K."/>
            <person name="Remington K.A."/>
            <person name="Clark A.G."/>
            <person name="Waterman M.S."/>
            <person name="Eichler E.E."/>
            <person name="Adams M.D."/>
            <person name="Hunkapiller M.W."/>
            <person name="Myers E.W."/>
            <person name="Venter J.C."/>
        </authorList>
    </citation>
    <scope>NUCLEOTIDE SEQUENCE [LARGE SCALE GENOMIC DNA]</scope>
</reference>
<protein>
    <recommendedName>
        <fullName evidence="6">Putative serine protease 42</fullName>
        <ecNumber>3.4.21.-</ecNumber>
    </recommendedName>
    <alternativeName>
        <fullName evidence="7">Serine protease 42, pseudogene</fullName>
    </alternativeName>
    <alternativeName>
        <fullName>Testis serine protease 2</fullName>
    </alternativeName>
</protein>
<proteinExistence type="uncertain"/>
<comment type="function">
    <text evidence="2">Plays a role in spermatogenesis. Involved in germ cell survival during meiosis.</text>
</comment>
<comment type="subcellular location">
    <subcellularLocation>
        <location evidence="2">Cytoplasm</location>
    </subcellularLocation>
    <subcellularLocation>
        <location evidence="2">Cell membrane</location>
        <topology evidence="2">Lipid-anchor</topology>
        <topology evidence="2">GPI-anchor</topology>
    </subcellularLocation>
</comment>
<comment type="similarity">
    <text evidence="4">Belongs to the peptidase S1 family.</text>
</comment>
<comment type="caution">
    <text evidence="6">Could be the product of a pseudogene.</text>
</comment>
<dbReference type="EC" id="3.4.21.-"/>
<dbReference type="EMBL" id="AJ544583">
    <property type="protein sequence ID" value="CAD67566.1"/>
    <property type="molecule type" value="mRNA"/>
</dbReference>
<dbReference type="EMBL" id="CH471055">
    <property type="protein sequence ID" value="EAW64788.1"/>
    <property type="molecule type" value="Genomic_DNA"/>
</dbReference>
<dbReference type="RefSeq" id="NP_874361.1">
    <property type="nucleotide sequence ID" value="NM_182702.1"/>
</dbReference>
<dbReference type="SMR" id="Q7Z5A4"/>
<dbReference type="BioGRID" id="130963">
    <property type="interactions" value="191"/>
</dbReference>
<dbReference type="FunCoup" id="Q7Z5A4">
    <property type="interactions" value="126"/>
</dbReference>
<dbReference type="IntAct" id="Q7Z5A4">
    <property type="interactions" value="5"/>
</dbReference>
<dbReference type="MEROPS" id="S01.362"/>
<dbReference type="GlyCosmos" id="Q7Z5A4">
    <property type="glycosylation" value="3 sites, No reported glycans"/>
</dbReference>
<dbReference type="GlyGen" id="Q7Z5A4">
    <property type="glycosylation" value="3 sites"/>
</dbReference>
<dbReference type="iPTMnet" id="Q7Z5A4"/>
<dbReference type="PhosphoSitePlus" id="Q7Z5A4"/>
<dbReference type="BioMuta" id="PRSS42"/>
<dbReference type="DMDM" id="74759189"/>
<dbReference type="MassIVE" id="Q7Z5A4"/>
<dbReference type="PaxDb" id="9606-ENSP00000401701"/>
<dbReference type="PeptideAtlas" id="Q7Z5A4"/>
<dbReference type="DNASU" id="339906"/>
<dbReference type="UCSC" id="uc011bap.2">
    <property type="organism name" value="human"/>
</dbReference>
<dbReference type="AGR" id="HGNC:30716"/>
<dbReference type="GeneCards" id="PRSS42P"/>
<dbReference type="HGNC" id="HGNC:30716">
    <property type="gene designation" value="PRSS42P"/>
</dbReference>
<dbReference type="neXtProt" id="NX_Q7Z5A4"/>
<dbReference type="eggNOG" id="KOG3627">
    <property type="taxonomic scope" value="Eukaryota"/>
</dbReference>
<dbReference type="HOGENOM" id="CLU_006842_0_4_1"/>
<dbReference type="InParanoid" id="Q7Z5A4"/>
<dbReference type="PAN-GO" id="Q7Z5A4">
    <property type="GO annotations" value="3 GO annotations based on evolutionary models"/>
</dbReference>
<dbReference type="PhylomeDB" id="Q7Z5A4"/>
<dbReference type="TreeFam" id="TF351676"/>
<dbReference type="PathwayCommons" id="Q7Z5A4"/>
<dbReference type="SignaLink" id="Q7Z5A4"/>
<dbReference type="BioGRID-ORCS" id="339906">
    <property type="hits" value="7 hits in 1140 CRISPR screens"/>
</dbReference>
<dbReference type="GenomeRNAi" id="339906"/>
<dbReference type="Pharos" id="Q7Z5A4">
    <property type="development level" value="Tdark"/>
</dbReference>
<dbReference type="PRO" id="PR:Q7Z5A4"/>
<dbReference type="Proteomes" id="UP000005640">
    <property type="component" value="Unplaced"/>
</dbReference>
<dbReference type="RNAct" id="Q7Z5A4">
    <property type="molecule type" value="protein"/>
</dbReference>
<dbReference type="GO" id="GO:0005737">
    <property type="term" value="C:cytoplasm"/>
    <property type="evidence" value="ECO:0007669"/>
    <property type="project" value="UniProtKB-SubCell"/>
</dbReference>
<dbReference type="GO" id="GO:0005615">
    <property type="term" value="C:extracellular space"/>
    <property type="evidence" value="ECO:0000318"/>
    <property type="project" value="GO_Central"/>
</dbReference>
<dbReference type="GO" id="GO:0005886">
    <property type="term" value="C:plasma membrane"/>
    <property type="evidence" value="ECO:0007669"/>
    <property type="project" value="UniProtKB-SubCell"/>
</dbReference>
<dbReference type="GO" id="GO:0098552">
    <property type="term" value="C:side of membrane"/>
    <property type="evidence" value="ECO:0007669"/>
    <property type="project" value="UniProtKB-KW"/>
</dbReference>
<dbReference type="GO" id="GO:0004252">
    <property type="term" value="F:serine-type endopeptidase activity"/>
    <property type="evidence" value="ECO:0000318"/>
    <property type="project" value="GO_Central"/>
</dbReference>
<dbReference type="GO" id="GO:0030154">
    <property type="term" value="P:cell differentiation"/>
    <property type="evidence" value="ECO:0007669"/>
    <property type="project" value="UniProtKB-KW"/>
</dbReference>
<dbReference type="GO" id="GO:0006508">
    <property type="term" value="P:proteolysis"/>
    <property type="evidence" value="ECO:0000318"/>
    <property type="project" value="GO_Central"/>
</dbReference>
<dbReference type="GO" id="GO:0007283">
    <property type="term" value="P:spermatogenesis"/>
    <property type="evidence" value="ECO:0007669"/>
    <property type="project" value="UniProtKB-KW"/>
</dbReference>
<dbReference type="CDD" id="cd00190">
    <property type="entry name" value="Tryp_SPc"/>
    <property type="match status" value="1"/>
</dbReference>
<dbReference type="FunFam" id="2.40.10.10:FF:000006">
    <property type="entry name" value="Serine proteinase stubble"/>
    <property type="match status" value="1"/>
</dbReference>
<dbReference type="Gene3D" id="2.40.10.10">
    <property type="entry name" value="Trypsin-like serine proteases"/>
    <property type="match status" value="1"/>
</dbReference>
<dbReference type="InterPro" id="IPR009003">
    <property type="entry name" value="Peptidase_S1_PA"/>
</dbReference>
<dbReference type="InterPro" id="IPR043504">
    <property type="entry name" value="Peptidase_S1_PA_chymotrypsin"/>
</dbReference>
<dbReference type="InterPro" id="IPR001314">
    <property type="entry name" value="Peptidase_S1A"/>
</dbReference>
<dbReference type="InterPro" id="IPR001254">
    <property type="entry name" value="Trypsin_dom"/>
</dbReference>
<dbReference type="InterPro" id="IPR018114">
    <property type="entry name" value="TRYPSIN_HIS"/>
</dbReference>
<dbReference type="PANTHER" id="PTHR24253:SF159">
    <property type="entry name" value="SERINE PROTEASE 42"/>
    <property type="match status" value="1"/>
</dbReference>
<dbReference type="PANTHER" id="PTHR24253">
    <property type="entry name" value="TRANSMEMBRANE PROTEASE SERINE"/>
    <property type="match status" value="1"/>
</dbReference>
<dbReference type="Pfam" id="PF00089">
    <property type="entry name" value="Trypsin"/>
    <property type="match status" value="1"/>
</dbReference>
<dbReference type="PRINTS" id="PR00722">
    <property type="entry name" value="CHYMOTRYPSIN"/>
</dbReference>
<dbReference type="SMART" id="SM00020">
    <property type="entry name" value="Tryp_SPc"/>
    <property type="match status" value="1"/>
</dbReference>
<dbReference type="SUPFAM" id="SSF50494">
    <property type="entry name" value="Trypsin-like serine proteases"/>
    <property type="match status" value="1"/>
</dbReference>
<dbReference type="PROSITE" id="PS50240">
    <property type="entry name" value="TRYPSIN_DOM"/>
    <property type="match status" value="1"/>
</dbReference>
<dbReference type="PROSITE" id="PS00134">
    <property type="entry name" value="TRYPSIN_HIS"/>
    <property type="match status" value="1"/>
</dbReference>